<proteinExistence type="inferred from homology"/>
<keyword id="KW-0067">ATP-binding</keyword>
<keyword id="KW-0347">Helicase</keyword>
<keyword id="KW-0378">Hydrolase</keyword>
<keyword id="KW-0547">Nucleotide-binding</keyword>
<keyword id="KW-1185">Reference proteome</keyword>
<gene>
    <name type="ORF">UMAG_11114</name>
</gene>
<sequence length="1567" mass="170457">MAPRKKNPAIKSSGTTSSKASPLPDWVKGGGPKPPPSYTKAAKQQQTQSAGNDTAISATGSSSSSSPVAAASSAGGGGGGGQGQPREMLFPPGSKTPLNMLYERVNKLPGWEKPIVEPRRHKQGYSCAVTLKKVNKKDASNPFTVTFEPKEPTLRLECQSSLEAKHWGATYALFRIFNHLSLNLALPPGPREYWVKMEAYKKTAPSHQDWMWASDPFEAAAKRDAEKAKKEQDKLAAADAASRGEVSIINAKLNGAAKPLSKAWQEAKEVRLASSLREKIEATIRRAMSIFPSASAAPLDLVEEDQDADTAAPNSTPNIDAAGLEKELTSYGFRRGHARSAISWLTSARIALSNPSSSSTTAAALVDPMLASAASLADREAALEYLMLYTPEEDLPARFKPSTTSESFVTSSKAGASGDALAVGWAVDKLSKQAGLPRKAVQAVFKRIAAAEHERNVELPRLVKEGLALEMMLRQMAGWDSPAQAEEQWTSDAILDAVLFFPTRVNDADKEEIEIKRADERMAVEAVLGDDRVVVPSEHQRLGVQDYDVTIAGPGTSVGGTEDVRLRISSHPQALYPLARDKTHAVALPAFCVVSKTLPSYLKLALTQHLLRAFQGDNRRMDWYDAIEAGDGGIVLSLVEELESMWSKMIDDPPLLSSVMQYLVGPDSAESSVEATPETSRAATPTGPSRIANKRRTGGGRALRRDAEVDAQLQRQQRQLHTSPSYSKMDETRRSLPAASAAREILGLIRSNRVVIIAGETGCGKTTQVPQFILDEAIEAGRGSECNIVVTQPRRVSAIGVASRVAVERGEKLDGKKKAVAPGSLVGYAIRGERRASRECRLLFTTTGVLLRRLGAGGDTDLKGISHVVVDEVHERNVDSDFLLLELRELLRRNSRIKVVLMSATINQETFASYFGKAPCISIPGRTFAVEDHYLEDIVQQSGFRPSGNEWRGSARGGKQIEQEIGQLRAHLQAQGVDEETCKAVESLSRSGGRISYELLGAVVRYVVERAENEELSGAADGDVGGAILVFCPGVGEIRQAIDAITTSVRGQSKVEILPLHANLSADEQRRVFQPVGAGRRKIVVSTNVAETSITIPDVSYVVDTGRVKETRFEPESGLTRLVECWASRAACKQRRGRAGRVRAGECFRLYSRYVDEKKMAAQQTPEMRRVPLESLFLEVKSMREDEDVKEYLNKALDPPSLASMDAALTNLIEAGALQSDRGYKSRLTSLGKHLAQLPLDLRLAKLLIMGTIFGCLGPMLTVASIMSCKPLFNTPFEKREEASKARASFAAAGCRSDLLADAAAFEEWQTMRAQRKTNGEIREWCESHFISQSSLRDIQTNRLDLLSHLQEMGFVAPDYSAFGVYDDERYDMNAQHAGVLRSVILAGLWPAVVRIDVPSAKFDQSSSGTVQREAEARQVKYFDRNGRVFLHPSSTLFSCKGFESSYLTTFAKSSTGAGADSKVYLRDATEVPLFALLLFGGKLKINHFAGGIGIGSNQSGGDAKDENWVRLRANARIGVLCAQLRRLLDAVLDHAIDEPQDMFAVPGCKDVLSVIGQVLQRDGLAA</sequence>
<dbReference type="EC" id="3.6.4.-"/>
<dbReference type="EMBL" id="CM003151">
    <property type="protein sequence ID" value="KIS67610.1"/>
    <property type="molecule type" value="Genomic_DNA"/>
</dbReference>
<dbReference type="RefSeq" id="XP_011390801.1">
    <property type="nucleotide sequence ID" value="XM_011392499.1"/>
</dbReference>
<dbReference type="SMR" id="P0C7L7"/>
<dbReference type="FunCoup" id="P0C7L7">
    <property type="interactions" value="432"/>
</dbReference>
<dbReference type="STRING" id="237631.P0C7L7"/>
<dbReference type="EnsemblFungi" id="KIS67610">
    <property type="protein sequence ID" value="KIS67610"/>
    <property type="gene ID" value="UMAG_11114"/>
</dbReference>
<dbReference type="GeneID" id="23567040"/>
<dbReference type="KEGG" id="uma:UMAG_11114"/>
<dbReference type="VEuPathDB" id="FungiDB:UMAG_11114"/>
<dbReference type="eggNOG" id="KOG0162">
    <property type="taxonomic scope" value="Eukaryota"/>
</dbReference>
<dbReference type="eggNOG" id="KOG0920">
    <property type="taxonomic scope" value="Eukaryota"/>
</dbReference>
<dbReference type="InParanoid" id="P0C7L7"/>
<dbReference type="OrthoDB" id="5600252at2759"/>
<dbReference type="Proteomes" id="UP000000561">
    <property type="component" value="Chromosome 12"/>
</dbReference>
<dbReference type="GO" id="GO:1990904">
    <property type="term" value="C:ribonucleoprotein complex"/>
    <property type="evidence" value="ECO:0007669"/>
    <property type="project" value="UniProtKB-ARBA"/>
</dbReference>
<dbReference type="GO" id="GO:0005524">
    <property type="term" value="F:ATP binding"/>
    <property type="evidence" value="ECO:0007669"/>
    <property type="project" value="UniProtKB-KW"/>
</dbReference>
<dbReference type="GO" id="GO:0004386">
    <property type="term" value="F:helicase activity"/>
    <property type="evidence" value="ECO:0000318"/>
    <property type="project" value="GO_Central"/>
</dbReference>
<dbReference type="GO" id="GO:0016787">
    <property type="term" value="F:hydrolase activity"/>
    <property type="evidence" value="ECO:0007669"/>
    <property type="project" value="UniProtKB-KW"/>
</dbReference>
<dbReference type="GO" id="GO:0003723">
    <property type="term" value="F:RNA binding"/>
    <property type="evidence" value="ECO:0000318"/>
    <property type="project" value="GO_Central"/>
</dbReference>
<dbReference type="CDD" id="cd17917">
    <property type="entry name" value="DEXHc_RHA-like"/>
    <property type="match status" value="1"/>
</dbReference>
<dbReference type="CDD" id="cd18791">
    <property type="entry name" value="SF2_C_RHA"/>
    <property type="match status" value="1"/>
</dbReference>
<dbReference type="FunFam" id="3.40.50.300:FF:001860">
    <property type="entry name" value="ATP-dependent RNA helicase A, putative"/>
    <property type="match status" value="1"/>
</dbReference>
<dbReference type="FunFam" id="3.40.50.300:FF:003490">
    <property type="entry name" value="Predicted protein"/>
    <property type="match status" value="1"/>
</dbReference>
<dbReference type="FunFam" id="1.20.120.1080:FF:000002">
    <property type="entry name" value="Putative ATP-dependent RNA helicase DHX36"/>
    <property type="match status" value="1"/>
</dbReference>
<dbReference type="Gene3D" id="1.20.120.1080">
    <property type="match status" value="1"/>
</dbReference>
<dbReference type="Gene3D" id="3.40.50.300">
    <property type="entry name" value="P-loop containing nucleotide triphosphate hydrolases"/>
    <property type="match status" value="2"/>
</dbReference>
<dbReference type="InterPro" id="IPR011709">
    <property type="entry name" value="DEAD-box_helicase_OB_fold"/>
</dbReference>
<dbReference type="InterPro" id="IPR011545">
    <property type="entry name" value="DEAD/DEAH_box_helicase_dom"/>
</dbReference>
<dbReference type="InterPro" id="IPR002464">
    <property type="entry name" value="DNA/RNA_helicase_DEAH_CS"/>
</dbReference>
<dbReference type="InterPro" id="IPR056328">
    <property type="entry name" value="DSRM_DHX29"/>
</dbReference>
<dbReference type="InterPro" id="IPR007502">
    <property type="entry name" value="Helicase-assoc_dom"/>
</dbReference>
<dbReference type="InterPro" id="IPR014001">
    <property type="entry name" value="Helicase_ATP-bd"/>
</dbReference>
<dbReference type="InterPro" id="IPR001650">
    <property type="entry name" value="Helicase_C-like"/>
</dbReference>
<dbReference type="InterPro" id="IPR027417">
    <property type="entry name" value="P-loop_NTPase"/>
</dbReference>
<dbReference type="PANTHER" id="PTHR18934">
    <property type="entry name" value="ATP-DEPENDENT RNA HELICASE"/>
    <property type="match status" value="1"/>
</dbReference>
<dbReference type="PANTHER" id="PTHR18934:SF267">
    <property type="entry name" value="ATP-DEPENDENT RNA HELICASE YLR419W-RELATED"/>
    <property type="match status" value="1"/>
</dbReference>
<dbReference type="Pfam" id="PF00270">
    <property type="entry name" value="DEAD"/>
    <property type="match status" value="1"/>
</dbReference>
<dbReference type="Pfam" id="PF24385">
    <property type="entry name" value="DSRM_DHX29"/>
    <property type="match status" value="1"/>
</dbReference>
<dbReference type="Pfam" id="PF21010">
    <property type="entry name" value="HA2_C"/>
    <property type="match status" value="1"/>
</dbReference>
<dbReference type="Pfam" id="PF00271">
    <property type="entry name" value="Helicase_C"/>
    <property type="match status" value="1"/>
</dbReference>
<dbReference type="Pfam" id="PF07717">
    <property type="entry name" value="OB_NTP_bind"/>
    <property type="match status" value="1"/>
</dbReference>
<dbReference type="SMART" id="SM00487">
    <property type="entry name" value="DEXDc"/>
    <property type="match status" value="1"/>
</dbReference>
<dbReference type="SMART" id="SM00847">
    <property type="entry name" value="HA2"/>
    <property type="match status" value="1"/>
</dbReference>
<dbReference type="SMART" id="SM00490">
    <property type="entry name" value="HELICc"/>
    <property type="match status" value="1"/>
</dbReference>
<dbReference type="SUPFAM" id="SSF52540">
    <property type="entry name" value="P-loop containing nucleoside triphosphate hydrolases"/>
    <property type="match status" value="1"/>
</dbReference>
<dbReference type="PROSITE" id="PS00690">
    <property type="entry name" value="DEAH_ATP_HELICASE"/>
    <property type="match status" value="1"/>
</dbReference>
<dbReference type="PROSITE" id="PS51192">
    <property type="entry name" value="HELICASE_ATP_BIND_1"/>
    <property type="match status" value="1"/>
</dbReference>
<dbReference type="PROSITE" id="PS51194">
    <property type="entry name" value="HELICASE_CTER"/>
    <property type="match status" value="1"/>
</dbReference>
<organism>
    <name type="scientific">Mycosarcoma maydis</name>
    <name type="common">Corn smut fungus</name>
    <name type="synonym">Ustilago maydis</name>
    <dbReference type="NCBI Taxonomy" id="5270"/>
    <lineage>
        <taxon>Eukaryota</taxon>
        <taxon>Fungi</taxon>
        <taxon>Dikarya</taxon>
        <taxon>Basidiomycota</taxon>
        <taxon>Ustilaginomycotina</taxon>
        <taxon>Ustilaginomycetes</taxon>
        <taxon>Ustilaginales</taxon>
        <taxon>Ustilaginaceae</taxon>
        <taxon>Mycosarcoma</taxon>
    </lineage>
</organism>
<name>YUM14_MYCMD</name>
<reference key="1">
    <citation type="journal article" date="2006" name="Nature">
        <title>Insights from the genome of the biotrophic fungal plant pathogen Ustilago maydis.</title>
        <authorList>
            <person name="Kaemper J."/>
            <person name="Kahmann R."/>
            <person name="Boelker M."/>
            <person name="Ma L.-J."/>
            <person name="Brefort T."/>
            <person name="Saville B.J."/>
            <person name="Banuett F."/>
            <person name="Kronstad J.W."/>
            <person name="Gold S.E."/>
            <person name="Mueller O."/>
            <person name="Perlin M.H."/>
            <person name="Woesten H.A.B."/>
            <person name="de Vries R."/>
            <person name="Ruiz-Herrera J."/>
            <person name="Reynaga-Pena C.G."/>
            <person name="Snetselaar K."/>
            <person name="McCann M."/>
            <person name="Perez-Martin J."/>
            <person name="Feldbruegge M."/>
            <person name="Basse C.W."/>
            <person name="Steinberg G."/>
            <person name="Ibeas J.I."/>
            <person name="Holloman W."/>
            <person name="Guzman P."/>
            <person name="Farman M.L."/>
            <person name="Stajich J.E."/>
            <person name="Sentandreu R."/>
            <person name="Gonzalez-Prieto J.M."/>
            <person name="Kennell J.C."/>
            <person name="Molina L."/>
            <person name="Schirawski J."/>
            <person name="Mendoza-Mendoza A."/>
            <person name="Greilinger D."/>
            <person name="Muench K."/>
            <person name="Roessel N."/>
            <person name="Scherer M."/>
            <person name="Vranes M."/>
            <person name="Ladendorf O."/>
            <person name="Vincon V."/>
            <person name="Fuchs U."/>
            <person name="Sandrock B."/>
            <person name="Meng S."/>
            <person name="Ho E.C.H."/>
            <person name="Cahill M.J."/>
            <person name="Boyce K.J."/>
            <person name="Klose J."/>
            <person name="Klosterman S.J."/>
            <person name="Deelstra H.J."/>
            <person name="Ortiz-Castellanos L."/>
            <person name="Li W."/>
            <person name="Sanchez-Alonso P."/>
            <person name="Schreier P.H."/>
            <person name="Haeuser-Hahn I."/>
            <person name="Vaupel M."/>
            <person name="Koopmann E."/>
            <person name="Friedrich G."/>
            <person name="Voss H."/>
            <person name="Schlueter T."/>
            <person name="Margolis J."/>
            <person name="Platt D."/>
            <person name="Swimmer C."/>
            <person name="Gnirke A."/>
            <person name="Chen F."/>
            <person name="Vysotskaia V."/>
            <person name="Mannhaupt G."/>
            <person name="Gueldener U."/>
            <person name="Muensterkoetter M."/>
            <person name="Haase D."/>
            <person name="Oesterheld M."/>
            <person name="Mewes H.-W."/>
            <person name="Mauceli E.W."/>
            <person name="DeCaprio D."/>
            <person name="Wade C.M."/>
            <person name="Butler J."/>
            <person name="Young S.K."/>
            <person name="Jaffe D.B."/>
            <person name="Calvo S.E."/>
            <person name="Nusbaum C."/>
            <person name="Galagan J.E."/>
            <person name="Birren B.W."/>
        </authorList>
    </citation>
    <scope>NUCLEOTIDE SEQUENCE [LARGE SCALE GENOMIC DNA]</scope>
    <source>
        <strain>DSM 14603 / FGSC 9021 / UM521</strain>
    </source>
</reference>
<reference key="2">
    <citation type="submission" date="2014-09" db="EMBL/GenBank/DDBJ databases">
        <authorList>
            <person name="Gueldener U."/>
            <person name="Muensterkoetter M."/>
            <person name="Walter M.C."/>
            <person name="Mannhaupt G."/>
            <person name="Kahmann R."/>
        </authorList>
    </citation>
    <scope>GENOME REANNOTATION</scope>
    <source>
        <strain>DSM 14603 / FGSC 9021 / UM521</strain>
    </source>
</reference>
<feature type="chain" id="PRO_0000338567" description="Putative DEAH-box ATP-dependent helicase UM11114">
    <location>
        <begin position="1"/>
        <end position="1567"/>
    </location>
</feature>
<feature type="domain" description="Helicase ATP-binding" evidence="1">
    <location>
        <begin position="746"/>
        <end position="924"/>
    </location>
</feature>
<feature type="domain" description="Helicase C-terminal" evidence="2">
    <location>
        <begin position="1003"/>
        <end position="1184"/>
    </location>
</feature>
<feature type="region of interest" description="Disordered" evidence="3">
    <location>
        <begin position="1"/>
        <end position="95"/>
    </location>
</feature>
<feature type="region of interest" description="Disordered" evidence="3">
    <location>
        <begin position="670"/>
        <end position="734"/>
    </location>
</feature>
<feature type="short sequence motif" description="DEAH box">
    <location>
        <begin position="871"/>
        <end position="874"/>
    </location>
</feature>
<feature type="compositionally biased region" description="Polar residues" evidence="3">
    <location>
        <begin position="10"/>
        <end position="20"/>
    </location>
</feature>
<feature type="compositionally biased region" description="Low complexity" evidence="3">
    <location>
        <begin position="39"/>
        <end position="48"/>
    </location>
</feature>
<feature type="compositionally biased region" description="Low complexity" evidence="3">
    <location>
        <begin position="55"/>
        <end position="73"/>
    </location>
</feature>
<feature type="compositionally biased region" description="Gly residues" evidence="3">
    <location>
        <begin position="74"/>
        <end position="83"/>
    </location>
</feature>
<feature type="compositionally biased region" description="Polar residues" evidence="3">
    <location>
        <begin position="670"/>
        <end position="687"/>
    </location>
</feature>
<feature type="compositionally biased region" description="Polar residues" evidence="3">
    <location>
        <begin position="713"/>
        <end position="726"/>
    </location>
</feature>
<feature type="binding site" evidence="1">
    <location>
        <begin position="759"/>
        <end position="766"/>
    </location>
    <ligand>
        <name>ATP</name>
        <dbReference type="ChEBI" id="CHEBI:30616"/>
    </ligand>
</feature>
<protein>
    <recommendedName>
        <fullName>Putative DEAH-box ATP-dependent helicase UM11114</fullName>
        <ecNumber>3.6.4.-</ecNumber>
    </recommendedName>
</protein>
<evidence type="ECO:0000255" key="1">
    <source>
        <dbReference type="PROSITE-ProRule" id="PRU00541"/>
    </source>
</evidence>
<evidence type="ECO:0000255" key="2">
    <source>
        <dbReference type="PROSITE-ProRule" id="PRU00542"/>
    </source>
</evidence>
<evidence type="ECO:0000256" key="3">
    <source>
        <dbReference type="SAM" id="MobiDB-lite"/>
    </source>
</evidence>
<evidence type="ECO:0000305" key="4"/>
<comment type="similarity">
    <text evidence="4">Belongs to the DEAD box helicase family. DEAH subfamily.</text>
</comment>
<accession>P0C7L7</accession>
<accession>A0A0D1DYN5</accession>
<accession>Q4P701</accession>